<feature type="chain" id="PRO_0000350088" description="Dual-specificity RNA methyltransferase RlmN">
    <location>
        <begin position="1"/>
        <end position="383"/>
    </location>
</feature>
<feature type="domain" description="Radical SAM core" evidence="2">
    <location>
        <begin position="101"/>
        <end position="349"/>
    </location>
</feature>
<feature type="active site" description="Proton acceptor" evidence="1">
    <location>
        <position position="95"/>
    </location>
</feature>
<feature type="active site" description="S-methylcysteine intermediate" evidence="1">
    <location>
        <position position="354"/>
    </location>
</feature>
<feature type="binding site" evidence="1">
    <location>
        <position position="115"/>
    </location>
    <ligand>
        <name>[4Fe-4S] cluster</name>
        <dbReference type="ChEBI" id="CHEBI:49883"/>
        <note>4Fe-4S-S-AdoMet</note>
    </ligand>
</feature>
<feature type="binding site" evidence="1">
    <location>
        <position position="119"/>
    </location>
    <ligand>
        <name>[4Fe-4S] cluster</name>
        <dbReference type="ChEBI" id="CHEBI:49883"/>
        <note>4Fe-4S-S-AdoMet</note>
    </ligand>
</feature>
<feature type="binding site" evidence="1">
    <location>
        <position position="122"/>
    </location>
    <ligand>
        <name>[4Fe-4S] cluster</name>
        <dbReference type="ChEBI" id="CHEBI:49883"/>
        <note>4Fe-4S-S-AdoMet</note>
    </ligand>
</feature>
<feature type="binding site" evidence="1">
    <location>
        <begin position="180"/>
        <end position="181"/>
    </location>
    <ligand>
        <name>S-adenosyl-L-methionine</name>
        <dbReference type="ChEBI" id="CHEBI:59789"/>
    </ligand>
</feature>
<feature type="binding site" evidence="1">
    <location>
        <position position="212"/>
    </location>
    <ligand>
        <name>S-adenosyl-L-methionine</name>
        <dbReference type="ChEBI" id="CHEBI:59789"/>
    </ligand>
</feature>
<feature type="binding site" evidence="1">
    <location>
        <begin position="234"/>
        <end position="236"/>
    </location>
    <ligand>
        <name>S-adenosyl-L-methionine</name>
        <dbReference type="ChEBI" id="CHEBI:59789"/>
    </ligand>
</feature>
<feature type="binding site" evidence="1">
    <location>
        <position position="311"/>
    </location>
    <ligand>
        <name>S-adenosyl-L-methionine</name>
        <dbReference type="ChEBI" id="CHEBI:59789"/>
    </ligand>
</feature>
<feature type="disulfide bond" description="(transient)" evidence="1">
    <location>
        <begin position="108"/>
        <end position="354"/>
    </location>
</feature>
<gene>
    <name evidence="1" type="primary">rlmN</name>
    <name type="ordered locus">Bxeno_A2825</name>
    <name type="ORF">Bxe_A1592</name>
</gene>
<protein>
    <recommendedName>
        <fullName evidence="1">Dual-specificity RNA methyltransferase RlmN</fullName>
        <ecNumber evidence="1">2.1.1.192</ecNumber>
    </recommendedName>
    <alternativeName>
        <fullName evidence="1">23S rRNA (adenine(2503)-C(2))-methyltransferase</fullName>
    </alternativeName>
    <alternativeName>
        <fullName evidence="1">23S rRNA m2A2503 methyltransferase</fullName>
    </alternativeName>
    <alternativeName>
        <fullName evidence="1">Ribosomal RNA large subunit methyltransferase N</fullName>
    </alternativeName>
    <alternativeName>
        <fullName evidence="1">tRNA (adenine(37)-C(2))-methyltransferase</fullName>
    </alternativeName>
    <alternativeName>
        <fullName evidence="1">tRNA m2A37 methyltransferase</fullName>
    </alternativeName>
</protein>
<reference key="1">
    <citation type="journal article" date="2006" name="Proc. Natl. Acad. Sci. U.S.A.">
        <title>Burkholderia xenovorans LB400 harbors a multi-replicon, 9.73-Mbp genome shaped for versatility.</title>
        <authorList>
            <person name="Chain P.S.G."/>
            <person name="Denef V.J."/>
            <person name="Konstantinidis K.T."/>
            <person name="Vergez L.M."/>
            <person name="Agullo L."/>
            <person name="Reyes V.L."/>
            <person name="Hauser L."/>
            <person name="Cordova M."/>
            <person name="Gomez L."/>
            <person name="Gonzalez M."/>
            <person name="Land M."/>
            <person name="Lao V."/>
            <person name="Larimer F."/>
            <person name="LiPuma J.J."/>
            <person name="Mahenthiralingam E."/>
            <person name="Malfatti S.A."/>
            <person name="Marx C.J."/>
            <person name="Parnell J.J."/>
            <person name="Ramette A."/>
            <person name="Richardson P."/>
            <person name="Seeger M."/>
            <person name="Smith D."/>
            <person name="Spilker T."/>
            <person name="Sul W.J."/>
            <person name="Tsoi T.V."/>
            <person name="Ulrich L.E."/>
            <person name="Zhulin I.B."/>
            <person name="Tiedje J.M."/>
        </authorList>
    </citation>
    <scope>NUCLEOTIDE SEQUENCE [LARGE SCALE GENOMIC DNA]</scope>
    <source>
        <strain>LB400</strain>
    </source>
</reference>
<sequence length="383" mass="41820">MTSSPTVNLLDLDAQGLVAYCDSLGEKPFRARQLQRWIHQYNAADFDGMTDLAKSLREKLKGRATISMPGIVSDHISTDGTRKWLIDVGNSNAVETVYIPEETRGTLCVSSQAGCAVNCRFCSTGKQGFSRNLTTGEIIGQLRMAEFALRASRGVDGGRATGGDGKGERVVTNVVMMGMGEPLLNYDAVVPAMRLMLDDNAYGLSRRRVTLSTSGVVPMMDRLGADLPVALAVSLHAPSDPLRDMLVPLNKKYPLRELMAACQRYLKVAPRDFITFEYCMLDGVNDSEAQARELLAVTRDVPCKFNLIPFNPFPESGLIRSKPEQIKRFAQVLMDAGVITTVRKTRGDDIDAACGQLAGAVKDRTRLAERTGKAAKIIEVRAV</sequence>
<proteinExistence type="inferred from homology"/>
<name>RLMN_PARXL</name>
<organism>
    <name type="scientific">Paraburkholderia xenovorans (strain LB400)</name>
    <dbReference type="NCBI Taxonomy" id="266265"/>
    <lineage>
        <taxon>Bacteria</taxon>
        <taxon>Pseudomonadati</taxon>
        <taxon>Pseudomonadota</taxon>
        <taxon>Betaproteobacteria</taxon>
        <taxon>Burkholderiales</taxon>
        <taxon>Burkholderiaceae</taxon>
        <taxon>Paraburkholderia</taxon>
    </lineage>
</organism>
<evidence type="ECO:0000255" key="1">
    <source>
        <dbReference type="HAMAP-Rule" id="MF_01849"/>
    </source>
</evidence>
<evidence type="ECO:0000255" key="2">
    <source>
        <dbReference type="PROSITE-ProRule" id="PRU01266"/>
    </source>
</evidence>
<dbReference type="EC" id="2.1.1.192" evidence="1"/>
<dbReference type="EMBL" id="CP000270">
    <property type="protein sequence ID" value="ABE31363.1"/>
    <property type="molecule type" value="Genomic_DNA"/>
</dbReference>
<dbReference type="RefSeq" id="WP_011488946.1">
    <property type="nucleotide sequence ID" value="NC_007951.1"/>
</dbReference>
<dbReference type="SMR" id="Q13X26"/>
<dbReference type="STRING" id="266265.Bxe_A1592"/>
<dbReference type="KEGG" id="bxb:DR64_3752"/>
<dbReference type="KEGG" id="bxe:Bxe_A1592"/>
<dbReference type="PATRIC" id="fig|266265.5.peg.2966"/>
<dbReference type="eggNOG" id="COG0820">
    <property type="taxonomic scope" value="Bacteria"/>
</dbReference>
<dbReference type="OrthoDB" id="9793973at2"/>
<dbReference type="Proteomes" id="UP000001817">
    <property type="component" value="Chromosome 1"/>
</dbReference>
<dbReference type="GO" id="GO:0005737">
    <property type="term" value="C:cytoplasm"/>
    <property type="evidence" value="ECO:0007669"/>
    <property type="project" value="UniProtKB-SubCell"/>
</dbReference>
<dbReference type="GO" id="GO:0051539">
    <property type="term" value="F:4 iron, 4 sulfur cluster binding"/>
    <property type="evidence" value="ECO:0007669"/>
    <property type="project" value="UniProtKB-UniRule"/>
</dbReference>
<dbReference type="GO" id="GO:0046872">
    <property type="term" value="F:metal ion binding"/>
    <property type="evidence" value="ECO:0007669"/>
    <property type="project" value="UniProtKB-KW"/>
</dbReference>
<dbReference type="GO" id="GO:0070040">
    <property type="term" value="F:rRNA (adenine(2503)-C2-)-methyltransferase activity"/>
    <property type="evidence" value="ECO:0007669"/>
    <property type="project" value="UniProtKB-UniRule"/>
</dbReference>
<dbReference type="GO" id="GO:0019843">
    <property type="term" value="F:rRNA binding"/>
    <property type="evidence" value="ECO:0007669"/>
    <property type="project" value="UniProtKB-UniRule"/>
</dbReference>
<dbReference type="GO" id="GO:0002935">
    <property type="term" value="F:tRNA (adenine(37)-C2)-methyltransferase activity"/>
    <property type="evidence" value="ECO:0007669"/>
    <property type="project" value="UniProtKB-UniRule"/>
</dbReference>
<dbReference type="GO" id="GO:0000049">
    <property type="term" value="F:tRNA binding"/>
    <property type="evidence" value="ECO:0007669"/>
    <property type="project" value="UniProtKB-UniRule"/>
</dbReference>
<dbReference type="GO" id="GO:0070475">
    <property type="term" value="P:rRNA base methylation"/>
    <property type="evidence" value="ECO:0007669"/>
    <property type="project" value="UniProtKB-UniRule"/>
</dbReference>
<dbReference type="GO" id="GO:0030488">
    <property type="term" value="P:tRNA methylation"/>
    <property type="evidence" value="ECO:0007669"/>
    <property type="project" value="UniProtKB-UniRule"/>
</dbReference>
<dbReference type="CDD" id="cd01335">
    <property type="entry name" value="Radical_SAM"/>
    <property type="match status" value="1"/>
</dbReference>
<dbReference type="FunFam" id="1.10.150.530:FF:000003">
    <property type="entry name" value="Dual-specificity RNA methyltransferase RlmN"/>
    <property type="match status" value="1"/>
</dbReference>
<dbReference type="FunFam" id="3.20.20.70:FF:000008">
    <property type="entry name" value="Dual-specificity RNA methyltransferase RlmN"/>
    <property type="match status" value="1"/>
</dbReference>
<dbReference type="Gene3D" id="1.10.150.530">
    <property type="match status" value="1"/>
</dbReference>
<dbReference type="Gene3D" id="3.20.20.70">
    <property type="entry name" value="Aldolase class I"/>
    <property type="match status" value="1"/>
</dbReference>
<dbReference type="HAMAP" id="MF_01849">
    <property type="entry name" value="RNA_methyltr_RlmN"/>
    <property type="match status" value="1"/>
</dbReference>
<dbReference type="InterPro" id="IPR013785">
    <property type="entry name" value="Aldolase_TIM"/>
</dbReference>
<dbReference type="InterPro" id="IPR040072">
    <property type="entry name" value="Methyltransferase_A"/>
</dbReference>
<dbReference type="InterPro" id="IPR048641">
    <property type="entry name" value="RlmN_N"/>
</dbReference>
<dbReference type="InterPro" id="IPR027492">
    <property type="entry name" value="RNA_MTrfase_RlmN"/>
</dbReference>
<dbReference type="InterPro" id="IPR004383">
    <property type="entry name" value="rRNA_lsu_MTrfase_RlmN/Cfr"/>
</dbReference>
<dbReference type="InterPro" id="IPR007197">
    <property type="entry name" value="rSAM"/>
</dbReference>
<dbReference type="NCBIfam" id="TIGR00048">
    <property type="entry name" value="rRNA_mod_RlmN"/>
    <property type="match status" value="1"/>
</dbReference>
<dbReference type="PANTHER" id="PTHR30544">
    <property type="entry name" value="23S RRNA METHYLTRANSFERASE"/>
    <property type="match status" value="1"/>
</dbReference>
<dbReference type="PANTHER" id="PTHR30544:SF5">
    <property type="entry name" value="RADICAL SAM CORE DOMAIN-CONTAINING PROTEIN"/>
    <property type="match status" value="1"/>
</dbReference>
<dbReference type="Pfam" id="PF04055">
    <property type="entry name" value="Radical_SAM"/>
    <property type="match status" value="1"/>
</dbReference>
<dbReference type="Pfam" id="PF21016">
    <property type="entry name" value="RlmN_N"/>
    <property type="match status" value="1"/>
</dbReference>
<dbReference type="PIRSF" id="PIRSF006004">
    <property type="entry name" value="CHP00048"/>
    <property type="match status" value="1"/>
</dbReference>
<dbReference type="SFLD" id="SFLDF00275">
    <property type="entry name" value="adenosine_C2_methyltransferase"/>
    <property type="match status" value="1"/>
</dbReference>
<dbReference type="SFLD" id="SFLDG01062">
    <property type="entry name" value="methyltransferase_(Class_A)"/>
    <property type="match status" value="1"/>
</dbReference>
<dbReference type="SUPFAM" id="SSF102114">
    <property type="entry name" value="Radical SAM enzymes"/>
    <property type="match status" value="1"/>
</dbReference>
<dbReference type="PROSITE" id="PS51918">
    <property type="entry name" value="RADICAL_SAM"/>
    <property type="match status" value="1"/>
</dbReference>
<keyword id="KW-0004">4Fe-4S</keyword>
<keyword id="KW-0963">Cytoplasm</keyword>
<keyword id="KW-1015">Disulfide bond</keyword>
<keyword id="KW-0408">Iron</keyword>
<keyword id="KW-0411">Iron-sulfur</keyword>
<keyword id="KW-0479">Metal-binding</keyword>
<keyword id="KW-0489">Methyltransferase</keyword>
<keyword id="KW-1185">Reference proteome</keyword>
<keyword id="KW-0698">rRNA processing</keyword>
<keyword id="KW-0949">S-adenosyl-L-methionine</keyword>
<keyword id="KW-0808">Transferase</keyword>
<keyword id="KW-0819">tRNA processing</keyword>
<comment type="function">
    <text evidence="1">Specifically methylates position 2 of adenine 2503 in 23S rRNA and position 2 of adenine 37 in tRNAs. m2A2503 modification seems to play a crucial role in the proofreading step occurring at the peptidyl transferase center and thus would serve to optimize ribosomal fidelity.</text>
</comment>
<comment type="catalytic activity">
    <reaction evidence="1">
        <text>adenosine(2503) in 23S rRNA + 2 reduced [2Fe-2S]-[ferredoxin] + 2 S-adenosyl-L-methionine = 2-methyladenosine(2503) in 23S rRNA + 5'-deoxyadenosine + L-methionine + 2 oxidized [2Fe-2S]-[ferredoxin] + S-adenosyl-L-homocysteine</text>
        <dbReference type="Rhea" id="RHEA:42916"/>
        <dbReference type="Rhea" id="RHEA-COMP:10000"/>
        <dbReference type="Rhea" id="RHEA-COMP:10001"/>
        <dbReference type="Rhea" id="RHEA-COMP:10152"/>
        <dbReference type="Rhea" id="RHEA-COMP:10282"/>
        <dbReference type="ChEBI" id="CHEBI:17319"/>
        <dbReference type="ChEBI" id="CHEBI:33737"/>
        <dbReference type="ChEBI" id="CHEBI:33738"/>
        <dbReference type="ChEBI" id="CHEBI:57844"/>
        <dbReference type="ChEBI" id="CHEBI:57856"/>
        <dbReference type="ChEBI" id="CHEBI:59789"/>
        <dbReference type="ChEBI" id="CHEBI:74411"/>
        <dbReference type="ChEBI" id="CHEBI:74497"/>
        <dbReference type="EC" id="2.1.1.192"/>
    </reaction>
</comment>
<comment type="catalytic activity">
    <reaction evidence="1">
        <text>adenosine(37) in tRNA + 2 reduced [2Fe-2S]-[ferredoxin] + 2 S-adenosyl-L-methionine = 2-methyladenosine(37) in tRNA + 5'-deoxyadenosine + L-methionine + 2 oxidized [2Fe-2S]-[ferredoxin] + S-adenosyl-L-homocysteine</text>
        <dbReference type="Rhea" id="RHEA:43332"/>
        <dbReference type="Rhea" id="RHEA-COMP:10000"/>
        <dbReference type="Rhea" id="RHEA-COMP:10001"/>
        <dbReference type="Rhea" id="RHEA-COMP:10162"/>
        <dbReference type="Rhea" id="RHEA-COMP:10485"/>
        <dbReference type="ChEBI" id="CHEBI:17319"/>
        <dbReference type="ChEBI" id="CHEBI:33737"/>
        <dbReference type="ChEBI" id="CHEBI:33738"/>
        <dbReference type="ChEBI" id="CHEBI:57844"/>
        <dbReference type="ChEBI" id="CHEBI:57856"/>
        <dbReference type="ChEBI" id="CHEBI:59789"/>
        <dbReference type="ChEBI" id="CHEBI:74411"/>
        <dbReference type="ChEBI" id="CHEBI:74497"/>
        <dbReference type="EC" id="2.1.1.192"/>
    </reaction>
</comment>
<comment type="cofactor">
    <cofactor evidence="1">
        <name>[4Fe-4S] cluster</name>
        <dbReference type="ChEBI" id="CHEBI:49883"/>
    </cofactor>
    <text evidence="1">Binds 1 [4Fe-4S] cluster. The cluster is coordinated with 3 cysteines and an exchangeable S-adenosyl-L-methionine.</text>
</comment>
<comment type="subcellular location">
    <subcellularLocation>
        <location evidence="1">Cytoplasm</location>
    </subcellularLocation>
</comment>
<comment type="miscellaneous">
    <text evidence="1">Reaction proceeds by a ping-pong mechanism involving intermediate methylation of a conserved cysteine residue.</text>
</comment>
<comment type="similarity">
    <text evidence="1">Belongs to the radical SAM superfamily. RlmN family.</text>
</comment>
<accession>Q13X26</accession>